<organism>
    <name type="scientific">Danio rerio</name>
    <name type="common">Zebrafish</name>
    <name type="synonym">Brachydanio rerio</name>
    <dbReference type="NCBI Taxonomy" id="7955"/>
    <lineage>
        <taxon>Eukaryota</taxon>
        <taxon>Metazoa</taxon>
        <taxon>Chordata</taxon>
        <taxon>Craniata</taxon>
        <taxon>Vertebrata</taxon>
        <taxon>Euteleostomi</taxon>
        <taxon>Actinopterygii</taxon>
        <taxon>Neopterygii</taxon>
        <taxon>Teleostei</taxon>
        <taxon>Ostariophysi</taxon>
        <taxon>Cypriniformes</taxon>
        <taxon>Danionidae</taxon>
        <taxon>Danioninae</taxon>
        <taxon>Danio</taxon>
    </lineage>
</organism>
<evidence type="ECO:0000250" key="1"/>
<evidence type="ECO:0000250" key="2">
    <source>
        <dbReference type="UniProtKB" id="P07900"/>
    </source>
</evidence>
<evidence type="ECO:0000250" key="3">
    <source>
        <dbReference type="UniProtKB" id="P08238"/>
    </source>
</evidence>
<evidence type="ECO:0000250" key="4">
    <source>
        <dbReference type="UniProtKB" id="Q6AZV1"/>
    </source>
</evidence>
<evidence type="ECO:0000256" key="5">
    <source>
        <dbReference type="SAM" id="MobiDB-lite"/>
    </source>
</evidence>
<evidence type="ECO:0000269" key="6">
    <source>
    </source>
</evidence>
<evidence type="ECO:0000269" key="7">
    <source>
    </source>
</evidence>
<evidence type="ECO:0000269" key="8">
    <source>
    </source>
</evidence>
<evidence type="ECO:0000269" key="9">
    <source>
    </source>
</evidence>
<evidence type="ECO:0000305" key="10"/>
<dbReference type="EMBL" id="AF068771">
    <property type="protein sequence ID" value="AAC21566.1"/>
    <property type="molecule type" value="mRNA"/>
</dbReference>
<dbReference type="EMBL" id="AF042108">
    <property type="protein sequence ID" value="AAB96969.1"/>
    <property type="molecule type" value="mRNA"/>
</dbReference>
<dbReference type="EMBL" id="BC065359">
    <property type="protein sequence ID" value="AAH65359.1"/>
    <property type="molecule type" value="mRNA"/>
</dbReference>
<dbReference type="EMBL" id="L35587">
    <property type="protein sequence ID" value="AAA97519.1"/>
    <property type="molecule type" value="mRNA"/>
</dbReference>
<dbReference type="RefSeq" id="NP_571385.2">
    <property type="nucleotide sequence ID" value="NM_131310.3"/>
</dbReference>
<dbReference type="SMR" id="O57521"/>
<dbReference type="BioGRID" id="78741">
    <property type="interactions" value="1"/>
</dbReference>
<dbReference type="FunCoup" id="O57521">
    <property type="interactions" value="2678"/>
</dbReference>
<dbReference type="IntAct" id="O57521">
    <property type="interactions" value="1"/>
</dbReference>
<dbReference type="MINT" id="O57521"/>
<dbReference type="STRING" id="7955.ENSDARP00000014978"/>
<dbReference type="PaxDb" id="7955-ENSDARP00000014978"/>
<dbReference type="Ensembl" id="ENSDART00000020084">
    <property type="protein sequence ID" value="ENSDARP00000014978"/>
    <property type="gene ID" value="ENSDARG00000029150"/>
</dbReference>
<dbReference type="Ensembl" id="ENSDART00000169321">
    <property type="protein sequence ID" value="ENSDARP00000137112"/>
    <property type="gene ID" value="ENSDARG00000029150"/>
</dbReference>
<dbReference type="GeneID" id="30573"/>
<dbReference type="KEGG" id="dre:30573"/>
<dbReference type="AGR" id="ZFIN:ZDB-GENE-990415-95"/>
<dbReference type="CTD" id="3326"/>
<dbReference type="ZFIN" id="ZDB-GENE-990415-95">
    <property type="gene designation" value="hsp90ab1"/>
</dbReference>
<dbReference type="eggNOG" id="KOG0019">
    <property type="taxonomic scope" value="Eukaryota"/>
</dbReference>
<dbReference type="HOGENOM" id="CLU_006684_1_3_1"/>
<dbReference type="InParanoid" id="O57521"/>
<dbReference type="OMA" id="TRMKAEQ"/>
<dbReference type="OrthoDB" id="5426351at2759"/>
<dbReference type="PhylomeDB" id="O57521"/>
<dbReference type="TreeFam" id="TF300686"/>
<dbReference type="Reactome" id="R-DRE-2029482">
    <property type="pathway name" value="Regulation of actin dynamics for phagocytic cup formation"/>
</dbReference>
<dbReference type="Reactome" id="R-DRE-3371497">
    <property type="pathway name" value="HSP90 chaperone cycle for steroid hormone receptors (SHR) in the presence of ligand"/>
</dbReference>
<dbReference type="Reactome" id="R-DRE-399954">
    <property type="pathway name" value="Sema3A PAK dependent Axon repulsion"/>
</dbReference>
<dbReference type="Reactome" id="R-DRE-6798695">
    <property type="pathway name" value="Neutrophil degranulation"/>
</dbReference>
<dbReference type="Reactome" id="R-DRE-844456">
    <property type="pathway name" value="The NLRP3 inflammasome"/>
</dbReference>
<dbReference type="Reactome" id="R-DRE-8937144">
    <property type="pathway name" value="Aryl hydrocarbon receptor signalling"/>
</dbReference>
<dbReference type="Reactome" id="R-DRE-8939211">
    <property type="pathway name" value="ESR-mediated signaling"/>
</dbReference>
<dbReference type="PRO" id="PR:O57521"/>
<dbReference type="Proteomes" id="UP000000437">
    <property type="component" value="Chromosome 20"/>
</dbReference>
<dbReference type="Bgee" id="ENSDARG00000029150">
    <property type="expression patterns" value="Expressed in cleaving embryo and 56 other cell types or tissues"/>
</dbReference>
<dbReference type="ExpressionAtlas" id="O57521">
    <property type="expression patterns" value="baseline and differential"/>
</dbReference>
<dbReference type="GO" id="GO:0034751">
    <property type="term" value="C:aryl hydrocarbon receptor complex"/>
    <property type="evidence" value="ECO:0000250"/>
    <property type="project" value="UniProtKB"/>
</dbReference>
<dbReference type="GO" id="GO:0005737">
    <property type="term" value="C:cytoplasm"/>
    <property type="evidence" value="ECO:0000250"/>
    <property type="project" value="UniProtKB"/>
</dbReference>
<dbReference type="GO" id="GO:0005829">
    <property type="term" value="C:cytosol"/>
    <property type="evidence" value="ECO:0000318"/>
    <property type="project" value="GO_Central"/>
</dbReference>
<dbReference type="GO" id="GO:0120293">
    <property type="term" value="C:dynein axonemal particle"/>
    <property type="evidence" value="ECO:0000250"/>
    <property type="project" value="UniProtKB"/>
</dbReference>
<dbReference type="GO" id="GO:0005576">
    <property type="term" value="C:extracellular region"/>
    <property type="evidence" value="ECO:0000250"/>
    <property type="project" value="UniProtKB"/>
</dbReference>
<dbReference type="GO" id="GO:0005634">
    <property type="term" value="C:nucleus"/>
    <property type="evidence" value="ECO:0000250"/>
    <property type="project" value="UniProtKB"/>
</dbReference>
<dbReference type="GO" id="GO:0048471">
    <property type="term" value="C:perinuclear region of cytoplasm"/>
    <property type="evidence" value="ECO:0000318"/>
    <property type="project" value="GO_Central"/>
</dbReference>
<dbReference type="GO" id="GO:0005886">
    <property type="term" value="C:plasma membrane"/>
    <property type="evidence" value="ECO:0000318"/>
    <property type="project" value="GO_Central"/>
</dbReference>
<dbReference type="GO" id="GO:0032991">
    <property type="term" value="C:protein-containing complex"/>
    <property type="evidence" value="ECO:0000318"/>
    <property type="project" value="GO_Central"/>
</dbReference>
<dbReference type="GO" id="GO:0005524">
    <property type="term" value="F:ATP binding"/>
    <property type="evidence" value="ECO:0000318"/>
    <property type="project" value="GO_Central"/>
</dbReference>
<dbReference type="GO" id="GO:0016887">
    <property type="term" value="F:ATP hydrolysis activity"/>
    <property type="evidence" value="ECO:0000318"/>
    <property type="project" value="GO_Central"/>
</dbReference>
<dbReference type="GO" id="GO:0140662">
    <property type="term" value="F:ATP-dependent protein folding chaperone"/>
    <property type="evidence" value="ECO:0007669"/>
    <property type="project" value="InterPro"/>
</dbReference>
<dbReference type="GO" id="GO:0046983">
    <property type="term" value="F:protein dimerization activity"/>
    <property type="evidence" value="ECO:0000250"/>
    <property type="project" value="UniProtKB"/>
</dbReference>
<dbReference type="GO" id="GO:0141069">
    <property type="term" value="F:receptor ligand inhibitor activity"/>
    <property type="evidence" value="ECO:0000250"/>
    <property type="project" value="UniProtKB"/>
</dbReference>
<dbReference type="GO" id="GO:0051082">
    <property type="term" value="F:unfolded protein binding"/>
    <property type="evidence" value="ECO:0000318"/>
    <property type="project" value="GO_Central"/>
</dbReference>
<dbReference type="GO" id="GO:0001568">
    <property type="term" value="P:blood vessel development"/>
    <property type="evidence" value="ECO:0000315"/>
    <property type="project" value="ZFIN"/>
</dbReference>
<dbReference type="GO" id="GO:0034605">
    <property type="term" value="P:cellular response to heat"/>
    <property type="evidence" value="ECO:0000318"/>
    <property type="project" value="GO_Central"/>
</dbReference>
<dbReference type="GO" id="GO:0050900">
    <property type="term" value="P:leukocyte migration"/>
    <property type="evidence" value="ECO:0000315"/>
    <property type="project" value="ZFIN"/>
</dbReference>
<dbReference type="GO" id="GO:0007517">
    <property type="term" value="P:muscle organ development"/>
    <property type="evidence" value="ECO:0007669"/>
    <property type="project" value="UniProtKB-KW"/>
</dbReference>
<dbReference type="GO" id="GO:0032435">
    <property type="term" value="P:negative regulation of proteasomal ubiquitin-dependent protein catabolic process"/>
    <property type="evidence" value="ECO:0000250"/>
    <property type="project" value="UniProtKB"/>
</dbReference>
<dbReference type="GO" id="GO:0030511">
    <property type="term" value="P:positive regulation of transforming growth factor beta receptor signaling pathway"/>
    <property type="evidence" value="ECO:0000250"/>
    <property type="project" value="UniProtKB"/>
</dbReference>
<dbReference type="GO" id="GO:0006457">
    <property type="term" value="P:protein folding"/>
    <property type="evidence" value="ECO:0000318"/>
    <property type="project" value="GO_Central"/>
</dbReference>
<dbReference type="GO" id="GO:0050821">
    <property type="term" value="P:protein stabilization"/>
    <property type="evidence" value="ECO:0000318"/>
    <property type="project" value="GO_Central"/>
</dbReference>
<dbReference type="GO" id="GO:0051726">
    <property type="term" value="P:regulation of cell cycle"/>
    <property type="evidence" value="ECO:0000250"/>
    <property type="project" value="UniProtKB"/>
</dbReference>
<dbReference type="GO" id="GO:0043627">
    <property type="term" value="P:response to estrogen"/>
    <property type="evidence" value="ECO:0000250"/>
    <property type="project" value="AgBase"/>
</dbReference>
<dbReference type="CDD" id="cd16927">
    <property type="entry name" value="HATPase_Hsp90-like"/>
    <property type="match status" value="1"/>
</dbReference>
<dbReference type="FunFam" id="1.20.120.790:FF:000001">
    <property type="entry name" value="Heat shock protein 90 alpha"/>
    <property type="match status" value="1"/>
</dbReference>
<dbReference type="FunFam" id="3.30.230.80:FF:000001">
    <property type="entry name" value="Heat shock protein 90 alpha"/>
    <property type="match status" value="1"/>
</dbReference>
<dbReference type="FunFam" id="3.40.50.11260:FF:000001">
    <property type="entry name" value="Heat shock protein 90 alpha"/>
    <property type="match status" value="1"/>
</dbReference>
<dbReference type="FunFam" id="3.30.565.10:FF:000204">
    <property type="entry name" value="Heat shock protein HSP 90-beta"/>
    <property type="match status" value="1"/>
</dbReference>
<dbReference type="Gene3D" id="3.30.230.80">
    <property type="match status" value="1"/>
</dbReference>
<dbReference type="Gene3D" id="3.40.50.11260">
    <property type="match status" value="1"/>
</dbReference>
<dbReference type="Gene3D" id="1.20.120.790">
    <property type="entry name" value="Heat shock protein 90, C-terminal domain"/>
    <property type="match status" value="1"/>
</dbReference>
<dbReference type="Gene3D" id="3.30.565.10">
    <property type="entry name" value="Histidine kinase-like ATPase, C-terminal domain"/>
    <property type="match status" value="1"/>
</dbReference>
<dbReference type="HAMAP" id="MF_00505">
    <property type="entry name" value="HSP90"/>
    <property type="match status" value="1"/>
</dbReference>
<dbReference type="InterPro" id="IPR036890">
    <property type="entry name" value="HATPase_C_sf"/>
</dbReference>
<dbReference type="InterPro" id="IPR019805">
    <property type="entry name" value="Heat_shock_protein_90_CS"/>
</dbReference>
<dbReference type="InterPro" id="IPR037196">
    <property type="entry name" value="HSP90_C"/>
</dbReference>
<dbReference type="InterPro" id="IPR001404">
    <property type="entry name" value="Hsp90_fam"/>
</dbReference>
<dbReference type="InterPro" id="IPR020575">
    <property type="entry name" value="Hsp90_N"/>
</dbReference>
<dbReference type="InterPro" id="IPR020568">
    <property type="entry name" value="Ribosomal_Su5_D2-typ_SF"/>
</dbReference>
<dbReference type="NCBIfam" id="NF003555">
    <property type="entry name" value="PRK05218.1"/>
    <property type="match status" value="1"/>
</dbReference>
<dbReference type="PANTHER" id="PTHR11528">
    <property type="entry name" value="HEAT SHOCK PROTEIN 90 FAMILY MEMBER"/>
    <property type="match status" value="1"/>
</dbReference>
<dbReference type="Pfam" id="PF13589">
    <property type="entry name" value="HATPase_c_3"/>
    <property type="match status" value="1"/>
</dbReference>
<dbReference type="Pfam" id="PF00183">
    <property type="entry name" value="HSP90"/>
    <property type="match status" value="1"/>
</dbReference>
<dbReference type="PIRSF" id="PIRSF002583">
    <property type="entry name" value="Hsp90"/>
    <property type="match status" value="1"/>
</dbReference>
<dbReference type="PRINTS" id="PR00775">
    <property type="entry name" value="HEATSHOCK90"/>
</dbReference>
<dbReference type="SMART" id="SM00387">
    <property type="entry name" value="HATPase_c"/>
    <property type="match status" value="1"/>
</dbReference>
<dbReference type="SUPFAM" id="SSF55874">
    <property type="entry name" value="ATPase domain of HSP90 chaperone/DNA topoisomerase II/histidine kinase"/>
    <property type="match status" value="1"/>
</dbReference>
<dbReference type="SUPFAM" id="SSF110942">
    <property type="entry name" value="HSP90 C-terminal domain"/>
    <property type="match status" value="1"/>
</dbReference>
<dbReference type="SUPFAM" id="SSF54211">
    <property type="entry name" value="Ribosomal protein S5 domain 2-like"/>
    <property type="match status" value="1"/>
</dbReference>
<dbReference type="PROSITE" id="PS00298">
    <property type="entry name" value="HSP90"/>
    <property type="match status" value="1"/>
</dbReference>
<gene>
    <name type="primary">hsp90ab1</name>
    <name type="synonym">hsp90b</name>
    <name evidence="3" type="synonym">hspc3</name>
</gene>
<proteinExistence type="evidence at protein level"/>
<name>HS90B_DANRE</name>
<comment type="function">
    <text evidence="3 6 7">Molecular chaperone that promotes the maturation, structural maintenance and proper regulation of specific target proteins involved for instance in cell cycle control and signal transduction. Undergoes a functional cycle linked to its ATPase activity. This cycle probably induces conformational changes in the client proteins, thereby causing their activation. Interacts dynamically with various co-chaperones that modulate its substrate recognition, ATPase cycle and chaperone function. Engages with a range of client protein classes via its interaction with various co-chaperone proteins or complexes, that act as adapters, simultaneously able to interact with the specific client and the central chaperone itself. Recruitment of ATP and co-chaperone followed by client protein forms a functional chaperone. After the completion of the chaperoning process, properly folded client protein and co-chaperone leave HSP90 in an ADP-bound partially open conformation and finally, ADP is released from HSP90 which acquires an open conformation for the next cycle (By similarity). Not required for myofibril formation in skeletal muscles (PubMed:10364427, PubMed:17586488).</text>
</comment>
<comment type="activity regulation">
    <text evidence="3">In the resting state, through the dimerization of its C-terminal domain, HSP90 forms a homodimer which is defined as the open conformation. Upon ATP-binding, the N-terminal domain undergoes significant conformational changes and comes in contact to form an active closed conformation. After HSP90 finishes its chaperoning tasks of assisting the proper folding, stabilization and activation of client proteins under the active state, ATP molecule is hydrolyzed to ADP which then dissociates from HSP90 and directs the protein back to the resting state.</text>
</comment>
<comment type="subunit">
    <text evidence="3 7">Monomer. Homodimer (By similarity). Interacts with unc45b (PubMed:17586488).</text>
</comment>
<comment type="subcellular location">
    <subcellularLocation>
        <location evidence="3">Cytoplasm</location>
    </subcellularLocation>
    <subcellularLocation>
        <location evidence="4">Dynein axonemal particle</location>
    </subcellularLocation>
</comment>
<comment type="tissue specificity">
    <text evidence="7 9">Detected throughout the embryo and in low levels in the musculature. Expressed predominantly in the developing brain, tail bud and cells surrounding the posterior margin of the yolk tube.</text>
</comment>
<comment type="developmental stage">
    <text evidence="8">Expressed throughout embryonic development.</text>
</comment>
<comment type="induction">
    <text evidence="8">By heat shock during early embryogenesis.</text>
</comment>
<comment type="domain">
    <text evidence="2">The TPR repeat-binding motif mediates interaction with TPR repeat-containing proteins.</text>
</comment>
<comment type="similarity">
    <text evidence="10">Belongs to the heat shock protein 90 family.</text>
</comment>
<protein>
    <recommendedName>
        <fullName>Heat shock protein HSP 90-beta</fullName>
    </recommendedName>
</protein>
<accession>O57521</accession>
<accession>Q6P0Y9</accession>
<accession>Q90475</accession>
<reference key="1">
    <citation type="journal article" date="1999" name="Dev. Biol.">
        <title>Disruption of zebrafish somite development by pharmacologic inhibition of Hsp90.</title>
        <authorList>
            <person name="Lele Z."/>
            <person name="Hartson S.D."/>
            <person name="Martin C.C."/>
            <person name="Whitesell L."/>
            <person name="Matts R.L."/>
            <person name="Krone P.H."/>
        </authorList>
    </citation>
    <scope>NUCLEOTIDE SEQUENCE [MRNA]</scope>
    <scope>FUNCTION</scope>
</reference>
<reference key="2">
    <citation type="journal article" date="2007" name="Dev. Biol.">
        <title>The UCS factor Steif/Unc-45b interacts with the heat shock protein Hsp90a during myofibrillogenesis.</title>
        <authorList>
            <person name="Etard C."/>
            <person name="Behra M."/>
            <person name="Fischer N."/>
            <person name="Hutcheson D."/>
            <person name="Geisler R."/>
            <person name="Strahle U."/>
        </authorList>
    </citation>
    <scope>NUCLEOTIDE SEQUENCE [MRNA]</scope>
    <scope>FUNCTION</scope>
    <scope>INTERACTION WITH UNC45B</scope>
    <scope>TISSUE SPECIFICITY</scope>
</reference>
<reference key="3">
    <citation type="submission" date="1998-01" db="EMBL/GenBank/DDBJ databases">
        <title>Molecular cloning of a cDNA encoding the Danio rerio hsp90 beta isoform.</title>
        <authorList>
            <person name="Coumailleau P."/>
            <person name="Angelier N."/>
        </authorList>
    </citation>
    <scope>NUCLEOTIDE SEQUENCE [MRNA]</scope>
</reference>
<reference key="4">
    <citation type="submission" date="2004-01" db="EMBL/GenBank/DDBJ databases">
        <authorList>
            <consortium name="NIH - Zebrafish Gene Collection (ZGC) project"/>
        </authorList>
    </citation>
    <scope>NUCLEOTIDE SEQUENCE [LARGE SCALE MRNA]</scope>
    <source>
        <tissue>Embryo</tissue>
    </source>
</reference>
<reference key="5">
    <citation type="journal article" date="1994" name="Biochem. Biophys. Res. Commun.">
        <title>HSP 90 alpha and HSP 90 beta genes are present in the zebrafish and are differentially regulated in developing embryos.</title>
        <authorList>
            <person name="Krone P.H."/>
            <person name="Sass J.B."/>
        </authorList>
    </citation>
    <scope>NUCLEOTIDE SEQUENCE [MRNA] OF 32-132</scope>
    <scope>DEVELOPMENTAL STAGE</scope>
    <scope>INDUCTION</scope>
    <source>
        <tissue>Embryo</tissue>
    </source>
</reference>
<reference key="6">
    <citation type="journal article" date="1996" name="Mech. Dev.">
        <title>Specific localization of zebrafish hsp90 alpha mRNA to myoD-expressing cells suggests a role for hsp90 alpha during normal muscle development.</title>
        <authorList>
            <person name="Sass J.B."/>
            <person name="Weinberg E.S."/>
            <person name="Krone P.H."/>
        </authorList>
    </citation>
    <scope>TISSUE SPECIFICITY</scope>
</reference>
<keyword id="KW-0067">ATP-binding</keyword>
<keyword id="KW-0143">Chaperone</keyword>
<keyword id="KW-0963">Cytoplasm</keyword>
<keyword id="KW-0517">Myogenesis</keyword>
<keyword id="KW-0547">Nucleotide-binding</keyword>
<keyword id="KW-0597">Phosphoprotein</keyword>
<keyword id="KW-1185">Reference proteome</keyword>
<keyword id="KW-0346">Stress response</keyword>
<sequence>MPEEMRQEEEAETFAFQAEIAQLMSLIINTFYSNKEIFLRELVSNASDALDKIRYESLTDPTKLDSGKDLKIDIIPNVQERTLTLIDTGIGMTKADLINNLGTIAKSGTKAFMEALQAGADISMIGQFGVGFYSAYLVAEKVTVITKHNDDEQYAWESSAGGSFTVKVDHGEPIGRGTKVILHLKEDQTEYIEEKRVKEVVKKHSQFIGYPITLYVEKERDKEISDDEAEEEKAEKEEKEEEGEDKPKIEDVGSDDEEDTKDKDKKKKKKIKEKYIDQEELNKTKPIWTRNPDDISNEEYGEFYKSLTNDWEDHLAVKHFSVEGQLEFRALLFIPRRAPFDLFENKKKKNNIKLYVRRVFIMDNCEELIPEYLNFIRGVVDSEDLPLNISREMLQQSKILKVIRKNIVKKCLELFAELAEDKDNYKKFYDAFSKNLKLGIHEDSQNRKKLSELLRYQSSQSGDEMTSLTEYVSRMKENQKSIYYITGESKDQVAHSAFVERVCKRGFEVLYMTEPIDEYCVQQLKDFDGKSLVSVTKEGLELPEDEDEKKKMEEDKAKFENLCKLMKEILDKKVEKVTVSNRLVSSPCCIVTSTYGWTANMERIMKAQALRDNSTMGYMMAKKHLEINPDHPIMETLRQKAEADKNDKAVKDLVILLFETALLSSGFSLDDPQTHSNRIYRMIKLGLGIDEDEDVPVEEPSSAAAPEDIPPLEGDDDASRMEEVD</sequence>
<feature type="chain" id="PRO_0000062925" description="Heat shock protein HSP 90-beta">
    <location>
        <begin position="1"/>
        <end position="725"/>
    </location>
</feature>
<feature type="region of interest" description="Disordered" evidence="5">
    <location>
        <begin position="220"/>
        <end position="269"/>
    </location>
</feature>
<feature type="region of interest" description="Disordered" evidence="5">
    <location>
        <begin position="691"/>
        <end position="725"/>
    </location>
</feature>
<feature type="short sequence motif" description="TPR repeat-binding">
    <location>
        <begin position="721"/>
        <end position="725"/>
    </location>
</feature>
<feature type="compositionally biased region" description="Acidic residues" evidence="5">
    <location>
        <begin position="224"/>
        <end position="244"/>
    </location>
</feature>
<feature type="binding site" evidence="1">
    <location>
        <position position="45"/>
    </location>
    <ligand>
        <name>ATP</name>
        <dbReference type="ChEBI" id="CHEBI:30616"/>
    </ligand>
</feature>
<feature type="binding site" evidence="1">
    <location>
        <position position="87"/>
    </location>
    <ligand>
        <name>ATP</name>
        <dbReference type="ChEBI" id="CHEBI:30616"/>
    </ligand>
</feature>
<feature type="binding site" evidence="1">
    <location>
        <position position="106"/>
    </location>
    <ligand>
        <name>ATP</name>
        <dbReference type="ChEBI" id="CHEBI:30616"/>
    </ligand>
</feature>
<feature type="binding site" evidence="1">
    <location>
        <position position="132"/>
    </location>
    <ligand>
        <name>ATP</name>
        <dbReference type="ChEBI" id="CHEBI:30616"/>
    </ligand>
</feature>
<feature type="binding site" evidence="1">
    <location>
        <position position="391"/>
    </location>
    <ligand>
        <name>ATP</name>
        <dbReference type="ChEBI" id="CHEBI:30616"/>
    </ligand>
</feature>
<feature type="modified residue" description="Phosphoserine" evidence="1">
    <location>
        <position position="225"/>
    </location>
</feature>
<feature type="modified residue" description="Phosphoserine" evidence="1">
    <location>
        <position position="254"/>
    </location>
</feature>
<feature type="sequence conflict" description="In Ref. 5; AAA97519." evidence="10" ref="5">
    <original>I</original>
    <variation>M</variation>
    <location>
        <position position="98"/>
    </location>
</feature>
<feature type="sequence conflict" description="In Ref. 1; AAC21566." evidence="10" ref="1">
    <original>EL</original>
    <variation>DV</variation>
    <location>
        <begin position="417"/>
        <end position="418"/>
    </location>
</feature>
<feature type="sequence conflict" description="In Ref. 3; AAB96969." evidence="10" ref="3">
    <original>S</original>
    <variation>C</variation>
    <location>
        <position position="444"/>
    </location>
</feature>
<feature type="sequence conflict" description="In Ref. 1; AAC21566." evidence="10" ref="1">
    <original>K</original>
    <variation>R</variation>
    <location>
        <position position="448"/>
    </location>
</feature>
<feature type="sequence conflict" description="In Ref. 1; AAC21566." evidence="10" ref="1">
    <original>D</original>
    <variation>Y</variation>
    <location>
        <position position="463"/>
    </location>
</feature>
<feature type="sequence conflict" description="In Ref. 3; AAB96969." evidence="10" ref="3">
    <original>K</original>
    <variation>N</variation>
    <location>
        <position position="622"/>
    </location>
</feature>
<feature type="sequence conflict" description="In Ref. 3; AAB96969." evidence="10" ref="3">
    <original>D</original>
    <variation>T</variation>
    <location>
        <position position="647"/>
    </location>
</feature>
<feature type="sequence conflict" description="In Ref. 3; AAB96969." evidence="10" ref="3">
    <original>S</original>
    <variation>T</variation>
    <location>
        <position position="701"/>
    </location>
</feature>
<feature type="sequence conflict" description="In Ref. 1; AAC21566." evidence="10" ref="1">
    <location>
        <position position="703"/>
    </location>
</feature>